<comment type="function">
    <text evidence="1">Acts as one of several non-catalytic accessory components of the cytoplasmic dynein 1 complex that are thought to be involved in linking dynein to cargos and to adapter proteins that regulate dynein function. Cytoplasmic dynein 1 acts as a motor for the intracellular retrograde motility of vesicles and organelles along microtubules. The intermediate chains mediate the binding of dynein to dynactin via its 150 kDa component (p150-glued) DCTN1. May play a role in mediating the interaction of cytoplasmic dynein with membranous organelles and kinetochores (By similarity).</text>
</comment>
<comment type="subunit">
    <text evidence="2 3 6">Homodimer (By similarity). The cytoplasmic dynein 1 complex consists of two catalytic heavy chains (HCs) and a number of non-catalytic subunits presented by intermediate chains (ICs), light intermediate chains (LICs) and light chains (LCs); the composition seems to vary in respect to the IC, LIC and LC composition. The heavy chain homodimer serves as a scaffold for the probable homodimeric assembly of the respective non-catalytic subunits. The ICs and LICs bind directly to the HC dimer and the LCs assemble on the IC dimer. Interacts with DYNC1H1. Interacts with DYNLT1 and DYNLT3. Interacts with DCTN1 (By similarity). Interacts with MCRS1; the interaction is required for the proper distribution of centriolar satellites.</text>
</comment>
<comment type="subcellular location">
    <subcellularLocation>
        <location evidence="8">Cytoplasm</location>
    </subcellularLocation>
    <subcellularLocation>
        <location evidence="1">Chromosome</location>
        <location evidence="1">Centromere</location>
        <location evidence="1">Kinetochore</location>
    </subcellularLocation>
    <subcellularLocation>
        <location evidence="1">Cytoplasm</location>
        <location evidence="1">Cytoskeleton</location>
        <location evidence="1">Spindle pole</location>
    </subcellularLocation>
</comment>
<comment type="similarity">
    <text evidence="8">Belongs to the dynein intermediate chain family.</text>
</comment>
<sequence length="608" mass="68556">MSDKSDLKAELERKKQRLAQIREEKKRKEEERKKKEADMQQKKEPVPDDSDLDRKRRETEALLQSIGISPEPPLVPTPMSPSSKSVSTPSEAGSQDSGDLGPLTRRRLHKLGVSKITQVDFLPREVVSYSKETQTPLATHQSEEDEDDEEMVEPKGDQDSEQENEDKKQEVKEAPPRELTEEEKQQILHSEEFLIFFDRTIRVIERALAEDSDIFFDYSGRELEEKDGDVQAGANLSFNRQFYDEHWSKHRVVTCMDWSLQYPELMVASYNNNEDAPHEPDGVALVWNMKFKKTTPEYVFHCQSSVMSVCFARFHPNLVVGGTYSGQIVLWDNRSHRRTPVQRTPLSAAAHTHPVYCVNVVGTQNAHNLITVSTDGKMCSWSLDMLSTPQESMELVYNKSKPVAVTGMAFPTGDVNNFVVGSEEGTVYTACRHGSKAGIGEVFEGHQGPVTGINCHMAVGPIDFSHLFVTSSFDWTVKLWTTKHNKPLYSFEDNADYVYDVMWSPVHPALFACVDGMGRLDLWNLNNDTEVPTASVAIEGASALNRVRWAQGGKEVAVGDSEGRIWIYDVGELAVPHNDEWTRFARTLVEIRANRADSEEEGAVELSA</sequence>
<keyword id="KW-0007">Acetylation</keyword>
<keyword id="KW-0137">Centromere</keyword>
<keyword id="KW-0158">Chromosome</keyword>
<keyword id="KW-0963">Cytoplasm</keyword>
<keyword id="KW-0206">Cytoskeleton</keyword>
<keyword id="KW-0243">Dynein</keyword>
<keyword id="KW-0995">Kinetochore</keyword>
<keyword id="KW-0493">Microtubule</keyword>
<keyword id="KW-0505">Motor protein</keyword>
<keyword id="KW-0597">Phosphoprotein</keyword>
<keyword id="KW-1185">Reference proteome</keyword>
<keyword id="KW-0677">Repeat</keyword>
<keyword id="KW-0813">Transport</keyword>
<keyword id="KW-0853">WD repeat</keyword>
<feature type="initiator methionine" description="Removed" evidence="4">
    <location>
        <position position="1"/>
    </location>
</feature>
<feature type="chain" id="PRO_0000393960" description="Cytoplasmic dynein 1 intermediate chain 1">
    <location>
        <begin position="2"/>
        <end position="608"/>
    </location>
</feature>
<feature type="repeat" description="WD 1">
    <location>
        <begin position="248"/>
        <end position="297"/>
    </location>
</feature>
<feature type="repeat" description="WD 2">
    <location>
        <begin position="301"/>
        <end position="341"/>
    </location>
</feature>
<feature type="repeat" description="WD 3">
    <location>
        <begin position="350"/>
        <end position="391"/>
    </location>
</feature>
<feature type="repeat" description="WD 4">
    <location>
        <begin position="400"/>
        <end position="440"/>
    </location>
</feature>
<feature type="repeat" description="WD 5">
    <location>
        <begin position="445"/>
        <end position="490"/>
    </location>
</feature>
<feature type="repeat" description="WD 6">
    <location>
        <begin position="493"/>
        <end position="533"/>
    </location>
</feature>
<feature type="repeat" description="WD 7">
    <location>
        <begin position="539"/>
        <end position="578"/>
    </location>
</feature>
<feature type="region of interest" description="Disordered" evidence="7">
    <location>
        <begin position="1"/>
        <end position="106"/>
    </location>
</feature>
<feature type="region of interest" description="Interaction with DYNLT1" evidence="2">
    <location>
        <begin position="110"/>
        <end position="126"/>
    </location>
</feature>
<feature type="region of interest" description="Disordered" evidence="7">
    <location>
        <begin position="132"/>
        <end position="184"/>
    </location>
</feature>
<feature type="compositionally biased region" description="Basic and acidic residues" evidence="7">
    <location>
        <begin position="1"/>
        <end position="13"/>
    </location>
</feature>
<feature type="compositionally biased region" description="Basic and acidic residues" evidence="7">
    <location>
        <begin position="20"/>
        <end position="60"/>
    </location>
</feature>
<feature type="compositionally biased region" description="Pro residues" evidence="7">
    <location>
        <begin position="70"/>
        <end position="79"/>
    </location>
</feature>
<feature type="compositionally biased region" description="Low complexity" evidence="7">
    <location>
        <begin position="80"/>
        <end position="90"/>
    </location>
</feature>
<feature type="compositionally biased region" description="Basic and acidic residues" evidence="7">
    <location>
        <begin position="165"/>
        <end position="184"/>
    </location>
</feature>
<feature type="modified residue" description="N-acetylserine" evidence="4">
    <location>
        <position position="2"/>
    </location>
</feature>
<feature type="modified residue" description="Phosphoserine" evidence="3">
    <location>
        <position position="50"/>
    </location>
</feature>
<feature type="modified residue" description="Phosphoserine" evidence="5">
    <location>
        <position position="83"/>
    </location>
</feature>
<feature type="modified residue" description="Phosphothreonine" evidence="4">
    <location>
        <position position="88"/>
    </location>
</feature>
<feature type="modified residue" description="Phosphoserine" evidence="4">
    <location>
        <position position="90"/>
    </location>
</feature>
<feature type="modified residue" description="Phosphoserine" evidence="3">
    <location>
        <position position="94"/>
    </location>
</feature>
<feature type="modified residue" description="Phosphoserine" evidence="3">
    <location>
        <position position="97"/>
    </location>
</feature>
<feature type="modified residue" description="Phosphothreonine" evidence="3">
    <location>
        <position position="139"/>
    </location>
</feature>
<feature type="modified residue" description="Phosphoserine" evidence="3">
    <location>
        <position position="142"/>
    </location>
</feature>
<feature type="modified residue" description="Phosphoserine" evidence="3">
    <location>
        <position position="160"/>
    </location>
</feature>
<feature type="modified residue" description="Phosphoserine" evidence="2">
    <location>
        <position position="598"/>
    </location>
</feature>
<name>DC1I1_BOVIN</name>
<dbReference type="EMBL" id="BC114074">
    <property type="protein sequence ID" value="AAI14075.1"/>
    <property type="molecule type" value="mRNA"/>
</dbReference>
<dbReference type="RefSeq" id="NP_001039981.1">
    <property type="nucleotide sequence ID" value="NM_001046516.1"/>
</dbReference>
<dbReference type="RefSeq" id="XP_005205222.1">
    <property type="nucleotide sequence ID" value="XM_005205165.5"/>
</dbReference>
<dbReference type="SMR" id="Q29RQ3"/>
<dbReference type="BioGRID" id="541426">
    <property type="interactions" value="2"/>
</dbReference>
<dbReference type="FunCoup" id="Q29RQ3">
    <property type="interactions" value="1209"/>
</dbReference>
<dbReference type="STRING" id="9913.ENSBTAP00000071565"/>
<dbReference type="PaxDb" id="9913-ENSBTAP00000020774"/>
<dbReference type="GeneID" id="613724"/>
<dbReference type="KEGG" id="bta:613724"/>
<dbReference type="CTD" id="1780"/>
<dbReference type="VEuPathDB" id="HostDB:ENSBTAG00000027134"/>
<dbReference type="eggNOG" id="KOG1587">
    <property type="taxonomic scope" value="Eukaryota"/>
</dbReference>
<dbReference type="HOGENOM" id="CLU_012999_1_1_1"/>
<dbReference type="InParanoid" id="Q29RQ3"/>
<dbReference type="OrthoDB" id="4189at2759"/>
<dbReference type="TreeFam" id="TF300553"/>
<dbReference type="Reactome" id="R-BTA-141444">
    <property type="pathway name" value="Amplification of signal from unattached kinetochores via a MAD2 inhibitory signal"/>
</dbReference>
<dbReference type="Reactome" id="R-BTA-2132295">
    <property type="pathway name" value="MHC class II antigen presentation"/>
</dbReference>
<dbReference type="Reactome" id="R-BTA-2467813">
    <property type="pathway name" value="Separation of Sister Chromatids"/>
</dbReference>
<dbReference type="Reactome" id="R-BTA-2500257">
    <property type="pathway name" value="Resolution of Sister Chromatid Cohesion"/>
</dbReference>
<dbReference type="Reactome" id="R-BTA-3371497">
    <property type="pathway name" value="HSP90 chaperone cycle for steroid hormone receptors (SHR) in the presence of ligand"/>
</dbReference>
<dbReference type="Reactome" id="R-BTA-5663220">
    <property type="pathway name" value="RHO GTPases Activate Formins"/>
</dbReference>
<dbReference type="Reactome" id="R-BTA-6807878">
    <property type="pathway name" value="COPI-mediated anterograde transport"/>
</dbReference>
<dbReference type="Reactome" id="R-BTA-6811436">
    <property type="pathway name" value="COPI-independent Golgi-to-ER retrograde traffic"/>
</dbReference>
<dbReference type="Reactome" id="R-BTA-68877">
    <property type="pathway name" value="Mitotic Prometaphase"/>
</dbReference>
<dbReference type="Reactome" id="R-BTA-9646399">
    <property type="pathway name" value="Aggrephagy"/>
</dbReference>
<dbReference type="Reactome" id="R-BTA-9648025">
    <property type="pathway name" value="EML4 and NUDC in mitotic spindle formation"/>
</dbReference>
<dbReference type="Proteomes" id="UP000009136">
    <property type="component" value="Chromosome 4"/>
</dbReference>
<dbReference type="Bgee" id="ENSBTAG00000027134">
    <property type="expression patterns" value="Expressed in Ammon's horn and 83 other cell types or tissues"/>
</dbReference>
<dbReference type="GO" id="GO:0005737">
    <property type="term" value="C:cytoplasm"/>
    <property type="evidence" value="ECO:0007669"/>
    <property type="project" value="UniProtKB-SubCell"/>
</dbReference>
<dbReference type="GO" id="GO:0005868">
    <property type="term" value="C:cytoplasmic dynein complex"/>
    <property type="evidence" value="ECO:0000314"/>
    <property type="project" value="UniProtKB"/>
</dbReference>
<dbReference type="GO" id="GO:0000776">
    <property type="term" value="C:kinetochore"/>
    <property type="evidence" value="ECO:0007669"/>
    <property type="project" value="UniProtKB-KW"/>
</dbReference>
<dbReference type="GO" id="GO:0005874">
    <property type="term" value="C:microtubule"/>
    <property type="evidence" value="ECO:0007669"/>
    <property type="project" value="UniProtKB-KW"/>
</dbReference>
<dbReference type="GO" id="GO:0000922">
    <property type="term" value="C:spindle pole"/>
    <property type="evidence" value="ECO:0007669"/>
    <property type="project" value="UniProtKB-SubCell"/>
</dbReference>
<dbReference type="GO" id="GO:0031982">
    <property type="term" value="C:vesicle"/>
    <property type="evidence" value="ECO:0000250"/>
    <property type="project" value="UniProtKB"/>
</dbReference>
<dbReference type="GO" id="GO:0045504">
    <property type="term" value="F:dynein heavy chain binding"/>
    <property type="evidence" value="ECO:0000318"/>
    <property type="project" value="GO_Central"/>
</dbReference>
<dbReference type="GO" id="GO:0045503">
    <property type="term" value="F:dynein light chain binding"/>
    <property type="evidence" value="ECO:0000318"/>
    <property type="project" value="GO_Central"/>
</dbReference>
<dbReference type="GO" id="GO:0010970">
    <property type="term" value="P:transport along microtubule"/>
    <property type="evidence" value="ECO:0000318"/>
    <property type="project" value="GO_Central"/>
</dbReference>
<dbReference type="FunFam" id="2.130.10.10:FF:000108">
    <property type="entry name" value="cytoplasmic dynein 1 intermediate chain 1 isoform X1"/>
    <property type="match status" value="1"/>
</dbReference>
<dbReference type="FunFam" id="2.130.10.10:FF:000026">
    <property type="entry name" value="cytoplasmic dynein 1 intermediate chain 2 isoform X2"/>
    <property type="match status" value="1"/>
</dbReference>
<dbReference type="Gene3D" id="2.130.10.10">
    <property type="entry name" value="YVTN repeat-like/Quinoprotein amine dehydrogenase"/>
    <property type="match status" value="2"/>
</dbReference>
<dbReference type="InterPro" id="IPR025956">
    <property type="entry name" value="DYNC1I1/DYNC1I2"/>
</dbReference>
<dbReference type="InterPro" id="IPR050687">
    <property type="entry name" value="Dynein_IC"/>
</dbReference>
<dbReference type="InterPro" id="IPR015943">
    <property type="entry name" value="WD40/YVTN_repeat-like_dom_sf"/>
</dbReference>
<dbReference type="InterPro" id="IPR036322">
    <property type="entry name" value="WD40_repeat_dom_sf"/>
</dbReference>
<dbReference type="InterPro" id="IPR001680">
    <property type="entry name" value="WD40_rpt"/>
</dbReference>
<dbReference type="PANTHER" id="PTHR12442:SF34">
    <property type="entry name" value="CYTOPLASMIC DYNEIN 1 INTERMEDIATE CHAIN 1"/>
    <property type="match status" value="1"/>
</dbReference>
<dbReference type="PANTHER" id="PTHR12442">
    <property type="entry name" value="DYNEIN INTERMEDIATE CHAIN"/>
    <property type="match status" value="1"/>
</dbReference>
<dbReference type="Pfam" id="PF11540">
    <property type="entry name" value="Dynein_IC2"/>
    <property type="match status" value="1"/>
</dbReference>
<dbReference type="Pfam" id="PF00400">
    <property type="entry name" value="WD40"/>
    <property type="match status" value="2"/>
</dbReference>
<dbReference type="SMART" id="SM00320">
    <property type="entry name" value="WD40"/>
    <property type="match status" value="5"/>
</dbReference>
<dbReference type="SUPFAM" id="SSF50978">
    <property type="entry name" value="WD40 repeat-like"/>
    <property type="match status" value="1"/>
</dbReference>
<dbReference type="PROSITE" id="PS50294">
    <property type="entry name" value="WD_REPEATS_REGION"/>
    <property type="match status" value="1"/>
</dbReference>
<proteinExistence type="evidence at protein level"/>
<organism>
    <name type="scientific">Bos taurus</name>
    <name type="common">Bovine</name>
    <dbReference type="NCBI Taxonomy" id="9913"/>
    <lineage>
        <taxon>Eukaryota</taxon>
        <taxon>Metazoa</taxon>
        <taxon>Chordata</taxon>
        <taxon>Craniata</taxon>
        <taxon>Vertebrata</taxon>
        <taxon>Euteleostomi</taxon>
        <taxon>Mammalia</taxon>
        <taxon>Eutheria</taxon>
        <taxon>Laurasiatheria</taxon>
        <taxon>Artiodactyla</taxon>
        <taxon>Ruminantia</taxon>
        <taxon>Pecora</taxon>
        <taxon>Bovidae</taxon>
        <taxon>Bovinae</taxon>
        <taxon>Bos</taxon>
    </lineage>
</organism>
<reference key="1">
    <citation type="submission" date="2006-02" db="EMBL/GenBank/DDBJ databases">
        <authorList>
            <consortium name="NIH - Mammalian Gene Collection (MGC) project"/>
        </authorList>
    </citation>
    <scope>NUCLEOTIDE SEQUENCE [LARGE SCALE MRNA]</scope>
</reference>
<reference key="2">
    <citation type="journal article" date="2002" name="Protein Sci.">
        <title>Subunit organization in cytoplasmic dynein subcomplexes.</title>
        <authorList>
            <person name="King S.J."/>
            <person name="Bonilla M."/>
            <person name="Rodgers M.E."/>
            <person name="Schroer T.A."/>
        </authorList>
    </citation>
    <scope>IDENTIFICATION IN THE CYTOPLASMIC DYNEIN 1 COMPLEX</scope>
</reference>
<gene>
    <name type="primary">DYNC1I1</name>
</gene>
<evidence type="ECO:0000250" key="1"/>
<evidence type="ECO:0000250" key="2">
    <source>
        <dbReference type="UniProtKB" id="O14576"/>
    </source>
</evidence>
<evidence type="ECO:0000250" key="3">
    <source>
        <dbReference type="UniProtKB" id="O88485"/>
    </source>
</evidence>
<evidence type="ECO:0000250" key="4">
    <source>
        <dbReference type="UniProtKB" id="Q13409"/>
    </source>
</evidence>
<evidence type="ECO:0000250" key="5">
    <source>
        <dbReference type="UniProtKB" id="Q62871"/>
    </source>
</evidence>
<evidence type="ECO:0000250" key="6">
    <source>
        <dbReference type="UniProtKB" id="Q63100"/>
    </source>
</evidence>
<evidence type="ECO:0000256" key="7">
    <source>
        <dbReference type="SAM" id="MobiDB-lite"/>
    </source>
</evidence>
<evidence type="ECO:0000305" key="8"/>
<accession>Q29RQ3</accession>
<protein>
    <recommendedName>
        <fullName>Cytoplasmic dynein 1 intermediate chain 1</fullName>
    </recommendedName>
    <alternativeName>
        <fullName>Cytoplasmic dynein intermediate chain 1</fullName>
    </alternativeName>
    <alternativeName>
        <fullName>Dynein intermediate chain 1, cytosolic</fullName>
        <shortName>DH IC-1</shortName>
    </alternativeName>
</protein>